<evidence type="ECO:0000250" key="1"/>
<evidence type="ECO:0000255" key="2"/>
<evidence type="ECO:0000305" key="3"/>
<organism>
    <name type="scientific">Hydra vulgaris</name>
    <name type="common">Hydra</name>
    <name type="synonym">Hydra attenuata</name>
    <dbReference type="NCBI Taxonomy" id="6087"/>
    <lineage>
        <taxon>Eukaryota</taxon>
        <taxon>Metazoa</taxon>
        <taxon>Cnidaria</taxon>
        <taxon>Hydrozoa</taxon>
        <taxon>Hydroidolina</taxon>
        <taxon>Anthoathecata</taxon>
        <taxon>Aplanulata</taxon>
        <taxon>Hydridae</taxon>
        <taxon>Hydra</taxon>
    </lineage>
</organism>
<proteinExistence type="evidence at transcript level"/>
<gene>
    <name type="primary">TROP1</name>
</gene>
<dbReference type="EMBL" id="X70840">
    <property type="protein sequence ID" value="CAA50188.1"/>
    <property type="molecule type" value="mRNA"/>
</dbReference>
<dbReference type="PIR" id="S32041">
    <property type="entry name" value="S32041"/>
</dbReference>
<dbReference type="RefSeq" id="NP_001296670.1">
    <property type="nucleotide sequence ID" value="NM_001309741.1"/>
</dbReference>
<dbReference type="SMR" id="P39921"/>
<dbReference type="EnsemblMetazoa" id="NM_001309741.1">
    <property type="protein sequence ID" value="NP_001296670.1"/>
    <property type="gene ID" value="LOC100215665"/>
</dbReference>
<dbReference type="GeneID" id="100215665"/>
<dbReference type="KEGG" id="hmg:100215665"/>
<dbReference type="OrthoDB" id="128924at2759"/>
<dbReference type="Proteomes" id="UP000694840">
    <property type="component" value="Unplaced"/>
</dbReference>
<dbReference type="Gene3D" id="1.20.5.170">
    <property type="match status" value="1"/>
</dbReference>
<dbReference type="Gene3D" id="1.20.5.340">
    <property type="match status" value="1"/>
</dbReference>
<dbReference type="InterPro" id="IPR000533">
    <property type="entry name" value="Tropomyosin"/>
</dbReference>
<dbReference type="PANTHER" id="PTHR19269">
    <property type="entry name" value="TROPOMYOSIN"/>
    <property type="match status" value="1"/>
</dbReference>
<dbReference type="Pfam" id="PF00261">
    <property type="entry name" value="Tropomyosin"/>
    <property type="match status" value="1"/>
</dbReference>
<dbReference type="PRINTS" id="PR00194">
    <property type="entry name" value="TROPOMYOSIN"/>
</dbReference>
<dbReference type="SUPFAM" id="SSF57997">
    <property type="entry name" value="Tropomyosin"/>
    <property type="match status" value="1"/>
</dbReference>
<sequence>MVVETGVNKLVRLQGKIEGINSKIDEADLRRANAKSSIVEASSRLEKAEGEVASFQRRIRLVQQNLNDVTERAQMLQSKVDNLEDVSESVKQARNQYEEEEAESDEKIQNLEEEVKVKKRELEENEIKLREKERRNVVVHRDIEAATVKADAIEKRIEILENTIKNGLESIKDLEEREGRTNEKENNIAEQISFLDNKFKEVEIRIEAAERNCNVLEHNIKETSEEIKTWKHNTHAIEEEIAAMDDVGDDDTQ</sequence>
<name>TPM1_HYDVU</name>
<accession>P39921</accession>
<reference key="1">
    <citation type="journal article" date="1994" name="J. Cell Sci.">
        <title>Hydra tropomyosin TROP1 is expressed in head-specific epithelial cells and is a major component of the cytoskeletal structure that anchors nematocytes.</title>
        <authorList>
            <person name="Lopez de Haro M.S."/>
            <person name="Salgado L.M."/>
            <person name="David C.N."/>
            <person name="Bosch T.C.G."/>
        </authorList>
    </citation>
    <scope>NUCLEOTIDE SEQUENCE [MRNA]</scope>
</reference>
<keyword id="KW-0175">Coiled coil</keyword>
<keyword id="KW-1185">Reference proteome</keyword>
<keyword id="KW-0677">Repeat</keyword>
<comment type="function">
    <text>Tropomyosin, in association with the troponin complex, plays a central role in the calcium dependent regulation of muscle contraction.</text>
</comment>
<comment type="subunit">
    <text evidence="1">Homodimer.</text>
</comment>
<comment type="domain">
    <text>The molecule is in a coiled coil structure that is formed by 2 polypeptide chains. The sequence exhibits a prominent seven-residues periodicity.</text>
</comment>
<comment type="similarity">
    <text evidence="3">Belongs to the tropomyosin family.</text>
</comment>
<feature type="chain" id="PRO_0000205659" description="Tropomyosin-1">
    <location>
        <begin position="1"/>
        <end position="253"/>
    </location>
</feature>
<feature type="coiled-coil region" evidence="2">
    <location>
        <begin position="7"/>
        <end position="253"/>
    </location>
</feature>
<protein>
    <recommendedName>
        <fullName>Tropomyosin-1</fullName>
    </recommendedName>
    <alternativeName>
        <fullName>Tropomyosin I</fullName>
    </alternativeName>
</protein>